<feature type="chain" id="PRO_1000007703" description="5'-nucleotidase SurE">
    <location>
        <begin position="1"/>
        <end position="257"/>
    </location>
</feature>
<feature type="binding site" evidence="1">
    <location>
        <position position="13"/>
    </location>
    <ligand>
        <name>a divalent metal cation</name>
        <dbReference type="ChEBI" id="CHEBI:60240"/>
    </ligand>
</feature>
<feature type="binding site" evidence="1">
    <location>
        <position position="14"/>
    </location>
    <ligand>
        <name>a divalent metal cation</name>
        <dbReference type="ChEBI" id="CHEBI:60240"/>
    </ligand>
</feature>
<feature type="binding site" evidence="1">
    <location>
        <position position="44"/>
    </location>
    <ligand>
        <name>a divalent metal cation</name>
        <dbReference type="ChEBI" id="CHEBI:60240"/>
    </ligand>
</feature>
<feature type="binding site" evidence="1">
    <location>
        <position position="100"/>
    </location>
    <ligand>
        <name>a divalent metal cation</name>
        <dbReference type="ChEBI" id="CHEBI:60240"/>
    </ligand>
</feature>
<protein>
    <recommendedName>
        <fullName evidence="1">5'-nucleotidase SurE</fullName>
        <ecNumber evidence="1">3.1.3.5</ecNumber>
    </recommendedName>
    <alternativeName>
        <fullName evidence="1">Nucleoside 5'-monophosphate phosphohydrolase</fullName>
    </alternativeName>
</protein>
<gene>
    <name evidence="1" type="primary">surE</name>
    <name type="ordered locus">BVU_1916</name>
</gene>
<comment type="function">
    <text evidence="1">Nucleotidase that shows phosphatase activity on nucleoside 5'-monophosphates.</text>
</comment>
<comment type="catalytic activity">
    <reaction evidence="1">
        <text>a ribonucleoside 5'-phosphate + H2O = a ribonucleoside + phosphate</text>
        <dbReference type="Rhea" id="RHEA:12484"/>
        <dbReference type="ChEBI" id="CHEBI:15377"/>
        <dbReference type="ChEBI" id="CHEBI:18254"/>
        <dbReference type="ChEBI" id="CHEBI:43474"/>
        <dbReference type="ChEBI" id="CHEBI:58043"/>
        <dbReference type="EC" id="3.1.3.5"/>
    </reaction>
</comment>
<comment type="cofactor">
    <cofactor evidence="1">
        <name>a divalent metal cation</name>
        <dbReference type="ChEBI" id="CHEBI:60240"/>
    </cofactor>
    <text evidence="1">Binds 1 divalent metal cation per subunit.</text>
</comment>
<comment type="subcellular location">
    <subcellularLocation>
        <location evidence="1">Cytoplasm</location>
    </subcellularLocation>
</comment>
<comment type="similarity">
    <text evidence="1">Belongs to the SurE nucleotidase family.</text>
</comment>
<organism>
    <name type="scientific">Phocaeicola vulgatus (strain ATCC 8482 / DSM 1447 / JCM 5826 / CCUG 4940 / NBRC 14291 / NCTC 11154)</name>
    <name type="common">Bacteroides vulgatus</name>
    <dbReference type="NCBI Taxonomy" id="435590"/>
    <lineage>
        <taxon>Bacteria</taxon>
        <taxon>Pseudomonadati</taxon>
        <taxon>Bacteroidota</taxon>
        <taxon>Bacteroidia</taxon>
        <taxon>Bacteroidales</taxon>
        <taxon>Bacteroidaceae</taxon>
        <taxon>Phocaeicola</taxon>
    </lineage>
</organism>
<dbReference type="EC" id="3.1.3.5" evidence="1"/>
<dbReference type="EMBL" id="CP000139">
    <property type="protein sequence ID" value="ABR39590.1"/>
    <property type="molecule type" value="Genomic_DNA"/>
</dbReference>
<dbReference type="RefSeq" id="WP_005845809.1">
    <property type="nucleotide sequence ID" value="NZ_JANSWM010000118.1"/>
</dbReference>
<dbReference type="SMR" id="A6L1M6"/>
<dbReference type="STRING" id="435590.BVU_1916"/>
<dbReference type="PaxDb" id="435590-BVU_1916"/>
<dbReference type="GeneID" id="5302882"/>
<dbReference type="KEGG" id="bvu:BVU_1916"/>
<dbReference type="eggNOG" id="COG0496">
    <property type="taxonomic scope" value="Bacteria"/>
</dbReference>
<dbReference type="HOGENOM" id="CLU_045192_1_0_10"/>
<dbReference type="BioCyc" id="BVUL435590:G1G59-2005-MONOMER"/>
<dbReference type="Proteomes" id="UP000002861">
    <property type="component" value="Chromosome"/>
</dbReference>
<dbReference type="GO" id="GO:0005737">
    <property type="term" value="C:cytoplasm"/>
    <property type="evidence" value="ECO:0007669"/>
    <property type="project" value="UniProtKB-SubCell"/>
</dbReference>
<dbReference type="GO" id="GO:0008253">
    <property type="term" value="F:5'-nucleotidase activity"/>
    <property type="evidence" value="ECO:0007669"/>
    <property type="project" value="UniProtKB-UniRule"/>
</dbReference>
<dbReference type="GO" id="GO:0046872">
    <property type="term" value="F:metal ion binding"/>
    <property type="evidence" value="ECO:0007669"/>
    <property type="project" value="UniProtKB-UniRule"/>
</dbReference>
<dbReference type="GO" id="GO:0000166">
    <property type="term" value="F:nucleotide binding"/>
    <property type="evidence" value="ECO:0007669"/>
    <property type="project" value="UniProtKB-KW"/>
</dbReference>
<dbReference type="Gene3D" id="3.40.1210.10">
    <property type="entry name" value="Survival protein SurE-like phosphatase/nucleotidase"/>
    <property type="match status" value="1"/>
</dbReference>
<dbReference type="HAMAP" id="MF_00060">
    <property type="entry name" value="SurE"/>
    <property type="match status" value="1"/>
</dbReference>
<dbReference type="InterPro" id="IPR030048">
    <property type="entry name" value="SurE"/>
</dbReference>
<dbReference type="InterPro" id="IPR002828">
    <property type="entry name" value="SurE-like_Pase/nucleotidase"/>
</dbReference>
<dbReference type="InterPro" id="IPR036523">
    <property type="entry name" value="SurE-like_sf"/>
</dbReference>
<dbReference type="NCBIfam" id="NF001492">
    <property type="entry name" value="PRK00346.2-2"/>
    <property type="match status" value="1"/>
</dbReference>
<dbReference type="NCBIfam" id="TIGR00087">
    <property type="entry name" value="surE"/>
    <property type="match status" value="1"/>
</dbReference>
<dbReference type="PANTHER" id="PTHR30457">
    <property type="entry name" value="5'-NUCLEOTIDASE SURE"/>
    <property type="match status" value="1"/>
</dbReference>
<dbReference type="PANTHER" id="PTHR30457:SF0">
    <property type="entry name" value="PHOSPHATASE, PUTATIVE (AFU_ORTHOLOGUE AFUA_4G01070)-RELATED"/>
    <property type="match status" value="1"/>
</dbReference>
<dbReference type="Pfam" id="PF01975">
    <property type="entry name" value="SurE"/>
    <property type="match status" value="1"/>
</dbReference>
<dbReference type="SUPFAM" id="SSF64167">
    <property type="entry name" value="SurE-like"/>
    <property type="match status" value="1"/>
</dbReference>
<name>SURE_PHOV8</name>
<reference key="1">
    <citation type="journal article" date="2007" name="PLoS Biol.">
        <title>Evolution of symbiotic bacteria in the distal human intestine.</title>
        <authorList>
            <person name="Xu J."/>
            <person name="Mahowald M.A."/>
            <person name="Ley R.E."/>
            <person name="Lozupone C.A."/>
            <person name="Hamady M."/>
            <person name="Martens E.C."/>
            <person name="Henrissat B."/>
            <person name="Coutinho P.M."/>
            <person name="Minx P."/>
            <person name="Latreille P."/>
            <person name="Cordum H."/>
            <person name="Van Brunt A."/>
            <person name="Kim K."/>
            <person name="Fulton R.S."/>
            <person name="Fulton L.A."/>
            <person name="Clifton S.W."/>
            <person name="Wilson R.K."/>
            <person name="Knight R.D."/>
            <person name="Gordon J.I."/>
        </authorList>
    </citation>
    <scope>NUCLEOTIDE SEQUENCE [LARGE SCALE GENOMIC DNA]</scope>
    <source>
        <strain>ATCC 8482 / DSM 1447 / JCM 5826 / CCUG 4940 / NBRC 14291 / NCTC 11154</strain>
    </source>
</reference>
<proteinExistence type="inferred from homology"/>
<evidence type="ECO:0000255" key="1">
    <source>
        <dbReference type="HAMAP-Rule" id="MF_00060"/>
    </source>
</evidence>
<sequence>MKKEKPLILLSNDDGVEAKGLNELIRGLRGMGEIIVMAPDGPRSGASGAITSEHPVKYYKVREEEDLTVYKCTGTPVDCVKLALHTVVPRRPDVVIGGINHGDNSSVNVHYSGTMGVVIEGCLKGISSIGYSLCNHFADADFSSSLPYIRRITEQVLEHGLPLGICLNVNFPDTASLKGVRICRQTNGAWINEWKRSLHPRGGEYFWLTGEFDNYEPEAEDSDHWALGHGYVAVTPTQIDVTAYGMMNELKNWNLEV</sequence>
<accession>A6L1M6</accession>
<keyword id="KW-0963">Cytoplasm</keyword>
<keyword id="KW-0378">Hydrolase</keyword>
<keyword id="KW-0479">Metal-binding</keyword>
<keyword id="KW-0547">Nucleotide-binding</keyword>